<dbReference type="EMBL" id="CU329671">
    <property type="protein sequence ID" value="CAA22353.1"/>
    <property type="molecule type" value="Genomic_DNA"/>
</dbReference>
<dbReference type="EMBL" id="AB027903">
    <property type="protein sequence ID" value="BAA87207.1"/>
    <property type="molecule type" value="Genomic_DNA"/>
</dbReference>
<dbReference type="PIR" id="T39494">
    <property type="entry name" value="T39494"/>
</dbReference>
<dbReference type="RefSeq" id="NP_596620.1">
    <property type="nucleotide sequence ID" value="NM_001022541.2"/>
</dbReference>
<dbReference type="SMR" id="Q1MTQ1"/>
<dbReference type="BioGRID" id="276404">
    <property type="interactions" value="129"/>
</dbReference>
<dbReference type="DIP" id="DIP-35717N"/>
<dbReference type="FunCoup" id="Q1MTQ1">
    <property type="interactions" value="61"/>
</dbReference>
<dbReference type="IntAct" id="Q1MTQ1">
    <property type="interactions" value="4"/>
</dbReference>
<dbReference type="STRING" id="284812.Q1MTQ1"/>
<dbReference type="iPTMnet" id="Q1MTQ1"/>
<dbReference type="PaxDb" id="4896-SPBC1604.20c.1"/>
<dbReference type="EnsemblFungi" id="SPBC1604.20c.1">
    <property type="protein sequence ID" value="SPBC1604.20c.1:pep"/>
    <property type="gene ID" value="SPBC1604.20c"/>
</dbReference>
<dbReference type="GeneID" id="2539857"/>
<dbReference type="KEGG" id="spo:2539857"/>
<dbReference type="PomBase" id="SPBC1604.20c">
    <property type="gene designation" value="tea2"/>
</dbReference>
<dbReference type="VEuPathDB" id="FungiDB:SPBC1604.20c"/>
<dbReference type="eggNOG" id="KOG0242">
    <property type="taxonomic scope" value="Eukaryota"/>
</dbReference>
<dbReference type="HOGENOM" id="CLU_001485_24_1_1"/>
<dbReference type="InParanoid" id="Q1MTQ1"/>
<dbReference type="OMA" id="DTFQIRI"/>
<dbReference type="PhylomeDB" id="Q1MTQ1"/>
<dbReference type="CD-CODE" id="9095A454">
    <property type="entry name" value="TIP body"/>
</dbReference>
<dbReference type="PRO" id="PR:Q1MTQ1"/>
<dbReference type="Proteomes" id="UP000002485">
    <property type="component" value="Chromosome II"/>
</dbReference>
<dbReference type="GO" id="GO:0051285">
    <property type="term" value="C:cell cortex of cell tip"/>
    <property type="evidence" value="ECO:0000314"/>
    <property type="project" value="PomBase"/>
</dbReference>
<dbReference type="GO" id="GO:0051286">
    <property type="term" value="C:cell tip"/>
    <property type="evidence" value="ECO:0000314"/>
    <property type="project" value="PomBase"/>
</dbReference>
<dbReference type="GO" id="GO:1903754">
    <property type="term" value="C:cortical microtubule plus-end"/>
    <property type="evidence" value="ECO:0000314"/>
    <property type="project" value="PomBase"/>
</dbReference>
<dbReference type="GO" id="GO:0005737">
    <property type="term" value="C:cytoplasm"/>
    <property type="evidence" value="ECO:0007005"/>
    <property type="project" value="PomBase"/>
</dbReference>
<dbReference type="GO" id="GO:0005881">
    <property type="term" value="C:cytoplasmic microtubule"/>
    <property type="evidence" value="ECO:0000314"/>
    <property type="project" value="PomBase"/>
</dbReference>
<dbReference type="GO" id="GO:1904511">
    <property type="term" value="C:cytoplasmic microtubule plus-end"/>
    <property type="evidence" value="ECO:0000314"/>
    <property type="project" value="PomBase"/>
</dbReference>
<dbReference type="GO" id="GO:1990752">
    <property type="term" value="C:microtubule end"/>
    <property type="evidence" value="ECO:0000314"/>
    <property type="project" value="PomBase"/>
</dbReference>
<dbReference type="GO" id="GO:0005524">
    <property type="term" value="F:ATP binding"/>
    <property type="evidence" value="ECO:0007669"/>
    <property type="project" value="UniProtKB-KW"/>
</dbReference>
<dbReference type="GO" id="GO:0016887">
    <property type="term" value="F:ATP hydrolysis activity"/>
    <property type="evidence" value="ECO:0000314"/>
    <property type="project" value="UniProtKB"/>
</dbReference>
<dbReference type="GO" id="GO:0008017">
    <property type="term" value="F:microtubule binding"/>
    <property type="evidence" value="ECO:0000314"/>
    <property type="project" value="UniProtKB"/>
</dbReference>
<dbReference type="GO" id="GO:0051010">
    <property type="term" value="F:microtubule plus-end binding"/>
    <property type="evidence" value="ECO:0000269"/>
    <property type="project" value="PomBase"/>
</dbReference>
<dbReference type="GO" id="GO:0008574">
    <property type="term" value="F:plus-end-directed microtubule motor activity"/>
    <property type="evidence" value="ECO:0000314"/>
    <property type="project" value="PomBase"/>
</dbReference>
<dbReference type="GO" id="GO:0007163">
    <property type="term" value="P:establishment or maintenance of cell polarity"/>
    <property type="evidence" value="ECO:0000315"/>
    <property type="project" value="PomBase"/>
</dbReference>
<dbReference type="GO" id="GO:0099117">
    <property type="term" value="P:protein transport along microtubule to cell tip"/>
    <property type="evidence" value="ECO:0000314"/>
    <property type="project" value="PomBase"/>
</dbReference>
<dbReference type="Gene3D" id="3.40.850.10">
    <property type="entry name" value="Kinesin motor domain"/>
    <property type="match status" value="1"/>
</dbReference>
<dbReference type="InterPro" id="IPR027640">
    <property type="entry name" value="Kinesin-like_fam"/>
</dbReference>
<dbReference type="InterPro" id="IPR019821">
    <property type="entry name" value="Kinesin_motor_CS"/>
</dbReference>
<dbReference type="InterPro" id="IPR001752">
    <property type="entry name" value="Kinesin_motor_dom"/>
</dbReference>
<dbReference type="InterPro" id="IPR036961">
    <property type="entry name" value="Kinesin_motor_dom_sf"/>
</dbReference>
<dbReference type="InterPro" id="IPR027417">
    <property type="entry name" value="P-loop_NTPase"/>
</dbReference>
<dbReference type="PANTHER" id="PTHR47968">
    <property type="entry name" value="CENTROMERE PROTEIN E"/>
    <property type="match status" value="1"/>
</dbReference>
<dbReference type="PANTHER" id="PTHR47968:SF36">
    <property type="entry name" value="KINESIN HEAVY CHAIN ISOFORM X1"/>
    <property type="match status" value="1"/>
</dbReference>
<dbReference type="Pfam" id="PF00225">
    <property type="entry name" value="Kinesin"/>
    <property type="match status" value="1"/>
</dbReference>
<dbReference type="PRINTS" id="PR00380">
    <property type="entry name" value="KINESINHEAVY"/>
</dbReference>
<dbReference type="SMART" id="SM00129">
    <property type="entry name" value="KISc"/>
    <property type="match status" value="1"/>
</dbReference>
<dbReference type="SUPFAM" id="SSF52540">
    <property type="entry name" value="P-loop containing nucleoside triphosphate hydrolases"/>
    <property type="match status" value="1"/>
</dbReference>
<dbReference type="PROSITE" id="PS00411">
    <property type="entry name" value="KINESIN_MOTOR_1"/>
    <property type="match status" value="1"/>
</dbReference>
<dbReference type="PROSITE" id="PS50067">
    <property type="entry name" value="KINESIN_MOTOR_2"/>
    <property type="match status" value="1"/>
</dbReference>
<proteinExistence type="evidence at protein level"/>
<reference evidence="9" key="1">
    <citation type="journal article" date="2000" name="J. Cell Biol.">
        <title>Tea2p is a kinesin-like protein required to generate polarized growth in fission yeast.</title>
        <authorList>
            <person name="Browning H."/>
            <person name="Hayles J."/>
            <person name="Mata J."/>
            <person name="Aveline L."/>
            <person name="Nurse P."/>
            <person name="McIntosh J.R."/>
        </authorList>
    </citation>
    <scope>NUCLEOTIDE SEQUENCE [GENOMIC DNA / MRNA]</scope>
    <scope>FUNCTION</scope>
    <scope>SUBCELLULAR LOCATION</scope>
</reference>
<reference key="2">
    <citation type="journal article" date="2002" name="Nature">
        <title>The genome sequence of Schizosaccharomyces pombe.</title>
        <authorList>
            <person name="Wood V."/>
            <person name="Gwilliam R."/>
            <person name="Rajandream M.A."/>
            <person name="Lyne M.H."/>
            <person name="Lyne R."/>
            <person name="Stewart A."/>
            <person name="Sgouros J.G."/>
            <person name="Peat N."/>
            <person name="Hayles J."/>
            <person name="Baker S.G."/>
            <person name="Basham D."/>
            <person name="Bowman S."/>
            <person name="Brooks K."/>
            <person name="Brown D."/>
            <person name="Brown S."/>
            <person name="Chillingworth T."/>
            <person name="Churcher C.M."/>
            <person name="Collins M."/>
            <person name="Connor R."/>
            <person name="Cronin A."/>
            <person name="Davis P."/>
            <person name="Feltwell T."/>
            <person name="Fraser A."/>
            <person name="Gentles S."/>
            <person name="Goble A."/>
            <person name="Hamlin N."/>
            <person name="Harris D.E."/>
            <person name="Hidalgo J."/>
            <person name="Hodgson G."/>
            <person name="Holroyd S."/>
            <person name="Hornsby T."/>
            <person name="Howarth S."/>
            <person name="Huckle E.J."/>
            <person name="Hunt S."/>
            <person name="Jagels K."/>
            <person name="James K.D."/>
            <person name="Jones L."/>
            <person name="Jones M."/>
            <person name="Leather S."/>
            <person name="McDonald S."/>
            <person name="McLean J."/>
            <person name="Mooney P."/>
            <person name="Moule S."/>
            <person name="Mungall K.L."/>
            <person name="Murphy L.D."/>
            <person name="Niblett D."/>
            <person name="Odell C."/>
            <person name="Oliver K."/>
            <person name="O'Neil S."/>
            <person name="Pearson D."/>
            <person name="Quail M.A."/>
            <person name="Rabbinowitsch E."/>
            <person name="Rutherford K.M."/>
            <person name="Rutter S."/>
            <person name="Saunders D."/>
            <person name="Seeger K."/>
            <person name="Sharp S."/>
            <person name="Skelton J."/>
            <person name="Simmonds M.N."/>
            <person name="Squares R."/>
            <person name="Squares S."/>
            <person name="Stevens K."/>
            <person name="Taylor K."/>
            <person name="Taylor R.G."/>
            <person name="Tivey A."/>
            <person name="Walsh S.V."/>
            <person name="Warren T."/>
            <person name="Whitehead S."/>
            <person name="Woodward J.R."/>
            <person name="Volckaert G."/>
            <person name="Aert R."/>
            <person name="Robben J."/>
            <person name="Grymonprez B."/>
            <person name="Weltjens I."/>
            <person name="Vanstreels E."/>
            <person name="Rieger M."/>
            <person name="Schaefer M."/>
            <person name="Mueller-Auer S."/>
            <person name="Gabel C."/>
            <person name="Fuchs M."/>
            <person name="Duesterhoeft A."/>
            <person name="Fritzc C."/>
            <person name="Holzer E."/>
            <person name="Moestl D."/>
            <person name="Hilbert H."/>
            <person name="Borzym K."/>
            <person name="Langer I."/>
            <person name="Beck A."/>
            <person name="Lehrach H."/>
            <person name="Reinhardt R."/>
            <person name="Pohl T.M."/>
            <person name="Eger P."/>
            <person name="Zimmermann W."/>
            <person name="Wedler H."/>
            <person name="Wambutt R."/>
            <person name="Purnelle B."/>
            <person name="Goffeau A."/>
            <person name="Cadieu E."/>
            <person name="Dreano S."/>
            <person name="Gloux S."/>
            <person name="Lelaure V."/>
            <person name="Mottier S."/>
            <person name="Galibert F."/>
            <person name="Aves S.J."/>
            <person name="Xiang Z."/>
            <person name="Hunt C."/>
            <person name="Moore K."/>
            <person name="Hurst S.M."/>
            <person name="Lucas M."/>
            <person name="Rochet M."/>
            <person name="Gaillardin C."/>
            <person name="Tallada V.A."/>
            <person name="Garzon A."/>
            <person name="Thode G."/>
            <person name="Daga R.R."/>
            <person name="Cruzado L."/>
            <person name="Jimenez J."/>
            <person name="Sanchez M."/>
            <person name="del Rey F."/>
            <person name="Benito J."/>
            <person name="Dominguez A."/>
            <person name="Revuelta J.L."/>
            <person name="Moreno S."/>
            <person name="Armstrong J."/>
            <person name="Forsburg S.L."/>
            <person name="Cerutti L."/>
            <person name="Lowe T."/>
            <person name="McCombie W.R."/>
            <person name="Paulsen I."/>
            <person name="Potashkin J."/>
            <person name="Shpakovski G.V."/>
            <person name="Ussery D."/>
            <person name="Barrell B.G."/>
            <person name="Nurse P."/>
        </authorList>
    </citation>
    <scope>NUCLEOTIDE SEQUENCE [LARGE SCALE GENOMIC DNA]</scope>
    <source>
        <strain>972 / ATCC 24843</strain>
    </source>
</reference>
<reference evidence="9 10" key="3">
    <citation type="journal article" date="2000" name="Genes Cells">
        <title>Large-scale screening of intracellular protein localization in living fission yeast cells by the use of a GFP-fusion genomic DNA library.</title>
        <authorList>
            <person name="Ding D.-Q."/>
            <person name="Tomita Y."/>
            <person name="Yamamoto A."/>
            <person name="Chikashige Y."/>
            <person name="Haraguchi T."/>
            <person name="Hiraoka Y."/>
        </authorList>
    </citation>
    <scope>NUCLEOTIDE SEQUENCE [LARGE SCALE GENOMIC DNA] OF 339-545</scope>
    <scope>SUBCELLULAR LOCATION</scope>
    <source>
        <strain evidence="10">ATCC 38364 / 968</strain>
    </source>
</reference>
<reference key="4">
    <citation type="journal article" date="2004" name="Dev. Cell">
        <title>Tea2p kinesin is involved in spatial microtubule organization by transporting tip1p on microtubules.</title>
        <authorList>
            <person name="Busch K.E."/>
            <person name="Hayles J."/>
            <person name="Nurse P."/>
            <person name="Brunner D."/>
        </authorList>
    </citation>
    <scope>FUNCTION</scope>
    <scope>INTERACTION WITH MAL3 AND TIP1</scope>
    <scope>SUBCELLULAR LOCATION</scope>
</reference>
<reference evidence="9" key="5">
    <citation type="journal article" date="2005" name="J. Biol. Chem.">
        <title>The EB1 homolog Mal3 stimulates the ATPase of the kinesin Tea2 by recruiting it to the microtubule.</title>
        <authorList>
            <person name="Browning H."/>
            <person name="Hackney D.D."/>
        </authorList>
    </citation>
    <scope>FUNCTION</scope>
    <scope>INTERACTION WITH MAL3</scope>
</reference>
<reference key="6">
    <citation type="journal article" date="2008" name="J. Proteome Res.">
        <title>Phosphoproteome analysis of fission yeast.</title>
        <authorList>
            <person name="Wilson-Grady J.T."/>
            <person name="Villen J."/>
            <person name="Gygi S.P."/>
        </authorList>
    </citation>
    <scope>PHOSPHORYLATION [LARGE SCALE ANALYSIS] AT SER-82</scope>
    <scope>IDENTIFICATION BY MASS SPECTROMETRY</scope>
</reference>
<keyword id="KW-0067">ATP-binding</keyword>
<keyword id="KW-0175">Coiled coil</keyword>
<keyword id="KW-0963">Cytoplasm</keyword>
<keyword id="KW-0206">Cytoskeleton</keyword>
<keyword id="KW-0378">Hydrolase</keyword>
<keyword id="KW-0493">Microtubule</keyword>
<keyword id="KW-0505">Motor protein</keyword>
<keyword id="KW-0547">Nucleotide-binding</keyword>
<keyword id="KW-0597">Phosphoprotein</keyword>
<keyword id="KW-1185">Reference proteome</keyword>
<comment type="function">
    <text evidence="5 6 7">Promotes microtubule growth, possibly through interactions with the microtubule end, and is important for establishing and maintaining polarized growth along the long axis of the cell. Acts as a kinesin motor protein that moves along microtubules and is required for proper localization of tea1 and tip1 to the cell tips and microtubules, respectively. ATPase activity stimulated via interaction with mal3.</text>
</comment>
<comment type="subunit">
    <text evidence="6 7">Interacts with mal3 and tip1.</text>
</comment>
<comment type="interaction">
    <interactant intactId="EBI-1107767">
        <id>Q1MTQ1</id>
    </interactant>
    <interactant intactId="EBI-1002268">
        <id>Q10113</id>
        <label>mal3</label>
    </interactant>
    <organismsDiffer>false</organismsDiffer>
    <experiments>3</experiments>
</comment>
<comment type="interaction">
    <interactant intactId="EBI-1107767">
        <id>Q1MTQ1</id>
    </interactant>
    <interactant intactId="EBI-1102463">
        <id>P79065</id>
        <label>tip1</label>
    </interactant>
    <organismsDiffer>false</organismsDiffer>
    <experiments>6</experiments>
</comment>
<comment type="subcellular location">
    <subcellularLocation>
        <location evidence="4 5 6">Cytoplasm</location>
        <location evidence="4 5 6">Cytoskeleton</location>
    </subcellularLocation>
    <text>Localized in large clusters at cell tips and also in punctate dots within the cell that are coincident with the ends of cytoplasmic microtubules.</text>
</comment>
<comment type="similarity">
    <text evidence="2">Belongs to the TRAFAC class myosin-kinesin ATPase superfamily. Kinesin family.</text>
</comment>
<name>TEA2_SCHPO</name>
<protein>
    <recommendedName>
        <fullName>Kinesin-like protein tea2</fullName>
    </recommendedName>
    <alternativeName>
        <fullName>Kinesin-like protein 4</fullName>
    </alternativeName>
    <alternativeName>
        <fullName>Tip elongation aberrant protein 2</fullName>
    </alternativeName>
</protein>
<feature type="chain" id="PRO_0000259608" description="Kinesin-like protein tea2">
    <location>
        <begin position="1"/>
        <end position="628"/>
    </location>
</feature>
<feature type="domain" description="Kinesin motor" evidence="2">
    <location>
        <begin position="132"/>
        <end position="460"/>
    </location>
</feature>
<feature type="region of interest" description="Interaction with mal3" evidence="7">
    <location>
        <begin position="2"/>
        <end position="122"/>
    </location>
</feature>
<feature type="region of interest" description="Disordered" evidence="3">
    <location>
        <begin position="588"/>
        <end position="628"/>
    </location>
</feature>
<feature type="coiled-coil region" evidence="1">
    <location>
        <begin position="530"/>
        <end position="557"/>
    </location>
</feature>
<feature type="compositionally biased region" description="Polar residues" evidence="3">
    <location>
        <begin position="589"/>
        <end position="602"/>
    </location>
</feature>
<feature type="compositionally biased region" description="Basic and acidic residues" evidence="3">
    <location>
        <begin position="603"/>
        <end position="620"/>
    </location>
</feature>
<feature type="binding site" evidence="2">
    <location>
        <begin position="218"/>
        <end position="225"/>
    </location>
    <ligand>
        <name>ATP</name>
        <dbReference type="ChEBI" id="CHEBI:30616"/>
    </ligand>
</feature>
<feature type="modified residue" description="Phosphoserine" evidence="8">
    <location>
        <position position="82"/>
    </location>
</feature>
<evidence type="ECO:0000255" key="1"/>
<evidence type="ECO:0000255" key="2">
    <source>
        <dbReference type="PROSITE-ProRule" id="PRU00283"/>
    </source>
</evidence>
<evidence type="ECO:0000256" key="3">
    <source>
        <dbReference type="SAM" id="MobiDB-lite"/>
    </source>
</evidence>
<evidence type="ECO:0000269" key="4">
    <source>
    </source>
</evidence>
<evidence type="ECO:0000269" key="5">
    <source>
    </source>
</evidence>
<evidence type="ECO:0000269" key="6">
    <source>
    </source>
</evidence>
<evidence type="ECO:0000269" key="7">
    <source>
    </source>
</evidence>
<evidence type="ECO:0000269" key="8">
    <source>
    </source>
</evidence>
<evidence type="ECO:0000305" key="9"/>
<evidence type="ECO:0000312" key="10">
    <source>
        <dbReference type="EMBL" id="BAA87207.1"/>
    </source>
</evidence>
<evidence type="ECO:0000312" key="11">
    <source>
        <dbReference type="EMBL" id="CAA22353.1"/>
    </source>
</evidence>
<sequence>MSSSSSKPVNTGLVTPRRYSTMTGIRTGPSQSGTGSIPYSPTSPLSRNFSNYSIPMLRSNSTQTNVNGPTAFDLGVTEKLMSPGTLDRYTRPALYPSKDLDYLKNEYVNYESTTSQQTNSKGLKESNFVGSGIITSIRIRPIGKNQGVWSHGKLSNDPYGREYIRQQTSTSSSTIQQEYLFNNVFGMESKNYDIYKRSVKSVVRNVFSGYNGIVFAYGMTGTGKTYSMQGTENEPGIIPLAMNDLFEMVENNSDDDTFQIRISYLEIYNERIRDLIGNSDEEPRIRENASGEVNVTPLTRVLVTSPEEVSQVIEQCNAIRKTAATDFNTYSSRSHAILQVFLIRNNPTAHTSQISSLSLVDLAGSERASAHHERRKEGAFINKSLLTLGTVISRLSAAANPSLTSNSGHIPYRESKLTRLLQQSLSGQSQISLLATISIESNHTMETTNTLKFASRAQNLPQDIRQAEAVTNVQAELASLHSALEKNAQEVEYYASLVKQLTSDLEERDTYIAMLEAERSQGTAISRARLRMEELLSDHNFEIADLRDELQDKEQIIYALRYAQKQRDIADFNQSLAKFPHKILKKNVTRGSRSSSDQFSNETKTEILPDDQQQSKKDSVTQETQLLS</sequence>
<gene>
    <name evidence="11" type="primary">tea2</name>
    <name evidence="11" type="synonym">klp4</name>
    <name type="ORF">SPBC1604.20c</name>
</gene>
<accession>Q1MTQ1</accession>
<accession>O94732</accession>
<organism>
    <name type="scientific">Schizosaccharomyces pombe (strain 972 / ATCC 24843)</name>
    <name type="common">Fission yeast</name>
    <dbReference type="NCBI Taxonomy" id="284812"/>
    <lineage>
        <taxon>Eukaryota</taxon>
        <taxon>Fungi</taxon>
        <taxon>Dikarya</taxon>
        <taxon>Ascomycota</taxon>
        <taxon>Taphrinomycotina</taxon>
        <taxon>Schizosaccharomycetes</taxon>
        <taxon>Schizosaccharomycetales</taxon>
        <taxon>Schizosaccharomycetaceae</taxon>
        <taxon>Schizosaccharomyces</taxon>
    </lineage>
</organism>